<feature type="signal peptide" evidence="4">
    <location>
        <begin position="1"/>
        <end position="18"/>
    </location>
</feature>
<feature type="chain" id="PRO_0000035878" description="Tyrosinase">
    <location>
        <begin position="19"/>
        <end position="529"/>
    </location>
</feature>
<feature type="topological domain" description="Lumenal, melanosome" evidence="4">
    <location>
        <begin position="19"/>
        <end position="476"/>
    </location>
</feature>
<feature type="transmembrane region" description="Helical" evidence="4">
    <location>
        <begin position="477"/>
        <end position="497"/>
    </location>
</feature>
<feature type="topological domain" description="Cytoplasmic" evidence="4">
    <location>
        <begin position="498"/>
        <end position="529"/>
    </location>
</feature>
<feature type="region of interest" description="Disordered" evidence="5">
    <location>
        <begin position="287"/>
        <end position="313"/>
    </location>
</feature>
<feature type="binding site" evidence="3">
    <location>
        <position position="180"/>
    </location>
    <ligand>
        <name>Cu cation</name>
        <dbReference type="ChEBI" id="CHEBI:23378"/>
        <label>A</label>
    </ligand>
</feature>
<feature type="binding site" evidence="3">
    <location>
        <position position="202"/>
    </location>
    <ligand>
        <name>Cu cation</name>
        <dbReference type="ChEBI" id="CHEBI:23378"/>
        <label>A</label>
    </ligand>
</feature>
<feature type="binding site" evidence="3">
    <location>
        <position position="211"/>
    </location>
    <ligand>
        <name>Cu cation</name>
        <dbReference type="ChEBI" id="CHEBI:23378"/>
        <label>A</label>
    </ligand>
</feature>
<feature type="binding site" evidence="3">
    <location>
        <position position="363"/>
    </location>
    <ligand>
        <name>Cu cation</name>
        <dbReference type="ChEBI" id="CHEBI:23378"/>
        <label>B</label>
    </ligand>
</feature>
<feature type="binding site" evidence="3">
    <location>
        <position position="367"/>
    </location>
    <ligand>
        <name>Cu cation</name>
        <dbReference type="ChEBI" id="CHEBI:23378"/>
        <label>B</label>
    </ligand>
</feature>
<feature type="binding site" evidence="3">
    <location>
        <position position="390"/>
    </location>
    <ligand>
        <name>Cu cation</name>
        <dbReference type="ChEBI" id="CHEBI:23378"/>
        <label>B</label>
    </ligand>
</feature>
<feature type="glycosylation site" description="N-linked (GlcNAc...) asparagine" evidence="4">
    <location>
        <position position="86"/>
    </location>
</feature>
<feature type="glycosylation site" description="N-linked (GlcNAc...) asparagine" evidence="4">
    <location>
        <position position="111"/>
    </location>
</feature>
<feature type="glycosylation site" description="N-linked (GlcNAc...) asparagine" evidence="4">
    <location>
        <position position="161"/>
    </location>
</feature>
<feature type="glycosylation site" description="N-linked (GlcNAc...) asparagine" evidence="4">
    <location>
        <position position="230"/>
    </location>
</feature>
<feature type="glycosylation site" description="N-linked (GlcNAc...) asparagine" evidence="4">
    <location>
        <position position="337"/>
    </location>
</feature>
<feature type="glycosylation site" description="N-linked (GlcNAc...) asparagine" evidence="4">
    <location>
        <position position="371"/>
    </location>
</feature>
<feature type="sequence conflict" description="In Ref. 3; AAG27271." evidence="7" ref="3">
    <original>V</original>
    <variation>A</variation>
    <location>
        <position position="5"/>
    </location>
</feature>
<feature type="sequence conflict" description="In Ref. 2; AAX82902/AAX82905." evidence="7" ref="2">
    <original>V</original>
    <variation>I</variation>
    <location>
        <position position="5"/>
    </location>
</feature>
<keyword id="KW-0015">Albinism</keyword>
<keyword id="KW-0186">Copper</keyword>
<keyword id="KW-0325">Glycoprotein</keyword>
<keyword id="KW-0470">Melanin biosynthesis</keyword>
<keyword id="KW-0472">Membrane</keyword>
<keyword id="KW-0479">Metal-binding</keyword>
<keyword id="KW-0503">Monooxygenase</keyword>
<keyword id="KW-0560">Oxidoreductase</keyword>
<keyword id="KW-1185">Reference proteome</keyword>
<keyword id="KW-0732">Signal</keyword>
<keyword id="KW-0812">Transmembrane</keyword>
<keyword id="KW-1133">Transmembrane helix</keyword>
<reference key="1">
    <citation type="journal article" date="2000" name="Pigment Cell Res.">
        <title>The tyrosinase gene in gorillas and the albinism of 'Snowflake'.</title>
        <authorList>
            <person name="Martinez-Arias R."/>
            <person name="Comas D."/>
            <person name="Andres A."/>
            <person name="Abello M.-T."/>
            <person name="Domingo-Roura X."/>
            <person name="Bertranpetit J."/>
        </authorList>
    </citation>
    <scope>NUCLEOTIDE SEQUENCE [GENOMIC DNA]</scope>
    <scope>INVOLVEMENT IN ALBINISM</scope>
    <source>
        <strain>Isolate Machinda</strain>
        <strain>Isolate Ndengue</strain>
        <strain>Isolate Snowflake</strain>
        <tissue>Blood</tissue>
    </source>
</reference>
<reference key="2">
    <citation type="submission" date="2005-01" db="EMBL/GenBank/DDBJ databases">
        <title>Analysis of 5' upstream regulatory sequences and LCR-like region of the Gorilla tyrosinase locus.</title>
        <authorList>
            <person name="Roy R."/>
            <person name="Cantero M."/>
            <person name="Montoliu L."/>
        </authorList>
    </citation>
    <scope>NUCLEOTIDE SEQUENCE [GENOMIC DNA]</scope>
    <source>
        <strain>Isolate Snowflake</strain>
        <strain>Isolate Urko</strain>
    </source>
</reference>
<reference key="3">
    <citation type="submission" date="1999-09" db="EMBL/GenBank/DDBJ databases">
        <title>Molecular evolution of tyrosinase gene in primates.</title>
        <authorList>
            <person name="Ding B."/>
            <person name="Ryder O.A."/>
            <person name="Shi P."/>
            <person name="Zhang Y.-P."/>
        </authorList>
    </citation>
    <scope>NUCLEOTIDE SEQUENCE [GENOMIC DNA] OF 1-388 AND 396-529</scope>
</reference>
<sequence length="529" mass="60365">MLLAVLYCLLWSFQTSAGHFPRACVSSKNLMEKECCPPWSGDRSPCGQLSGRGSCQNILLSNAPLGPQFPFTGVDDRESWPSVFYNRTCQCSGNFMGFNCGNCKFGFWGPNCTERRLLVRRNIFDLSAPEKDKFFAYLTLAKHTISSDYVIPIGTYGQMKNGSTPMFNDINIYDLFVWMHYYVSMDALLGGSEIWRDIDFAHEAPAFLPWHRLFLLRWEQEIQKLTGDENFTIPYWDWRDAEKCDICTDEYMGGQHPTNPNLLSPASFFSSWQIVCSRLEEYNSHQSLCNGTPEGPLQRNPGNHDKSRTPRLPSSADVEFCLSLTQYESGSMDKAANFSFRNTLEGFASPLTGIADASQSSMHNALHIYMNGTMSQVQGSANDPIFLLHHAFVDSIFEQWLRRHRPLQEVYPEANAPIGHNRESYMVPFIPLYRNGDFFISSKDLGYDYSYLQDSDPDSFQDYIKSYLEQASRIWSWLLGAAMVGAVLTALLAGLVSLLCRHKRKQLPEEKQPLLMEKEDYHSLYQSHL</sequence>
<evidence type="ECO:0000250" key="1">
    <source>
        <dbReference type="UniProtKB" id="P11344"/>
    </source>
</evidence>
<evidence type="ECO:0000250" key="2">
    <source>
        <dbReference type="UniProtKB" id="P14679"/>
    </source>
</evidence>
<evidence type="ECO:0000250" key="3">
    <source>
        <dbReference type="UniProtKB" id="Q9ZP19"/>
    </source>
</evidence>
<evidence type="ECO:0000255" key="4"/>
<evidence type="ECO:0000256" key="5">
    <source>
        <dbReference type="SAM" id="MobiDB-lite"/>
    </source>
</evidence>
<evidence type="ECO:0000269" key="6">
    <source>
    </source>
</evidence>
<evidence type="ECO:0000305" key="7"/>
<protein>
    <recommendedName>
        <fullName>Tyrosinase</fullName>
        <ecNumber>1.14.18.1</ecNumber>
    </recommendedName>
    <alternativeName>
        <fullName>Monophenol monooxygenase</fullName>
    </alternativeName>
</protein>
<proteinExistence type="inferred from homology"/>
<name>TYRO_GORGO</name>
<accession>Q9BDE0</accession>
<accession>Q2KP17</accession>
<accession>Q9GLU5</accession>
<accession>Q9GLU6</accession>
<gene>
    <name type="primary">TYR</name>
</gene>
<dbReference type="EC" id="1.14.18.1"/>
<dbReference type="EMBL" id="AF237806">
    <property type="protein sequence ID" value="AAK00804.1"/>
    <property type="molecule type" value="Genomic_DNA"/>
</dbReference>
<dbReference type="EMBL" id="AF237802">
    <property type="protein sequence ID" value="AAK00804.1"/>
    <property type="status" value="JOINED"/>
    <property type="molecule type" value="Genomic_DNA"/>
</dbReference>
<dbReference type="EMBL" id="AF237803">
    <property type="protein sequence ID" value="AAK00804.1"/>
    <property type="status" value="JOINED"/>
    <property type="molecule type" value="Genomic_DNA"/>
</dbReference>
<dbReference type="EMBL" id="AF237804">
    <property type="protein sequence ID" value="AAK00804.1"/>
    <property type="status" value="JOINED"/>
    <property type="molecule type" value="Genomic_DNA"/>
</dbReference>
<dbReference type="EMBL" id="AF237805">
    <property type="protein sequence ID" value="AAK00804.1"/>
    <property type="status" value="JOINED"/>
    <property type="molecule type" value="Genomic_DNA"/>
</dbReference>
<dbReference type="EMBL" id="AF237796">
    <property type="protein sequence ID" value="AAK00802.1"/>
    <property type="molecule type" value="Genomic_DNA"/>
</dbReference>
<dbReference type="EMBL" id="AF237792">
    <property type="protein sequence ID" value="AAK00802.1"/>
    <property type="status" value="JOINED"/>
    <property type="molecule type" value="Genomic_DNA"/>
</dbReference>
<dbReference type="EMBL" id="AF237793">
    <property type="protein sequence ID" value="AAK00802.1"/>
    <property type="status" value="JOINED"/>
    <property type="molecule type" value="Genomic_DNA"/>
</dbReference>
<dbReference type="EMBL" id="AF237794">
    <property type="protein sequence ID" value="AAK00802.1"/>
    <property type="status" value="JOINED"/>
    <property type="molecule type" value="Genomic_DNA"/>
</dbReference>
<dbReference type="EMBL" id="AF237795">
    <property type="protein sequence ID" value="AAK00802.1"/>
    <property type="status" value="JOINED"/>
    <property type="molecule type" value="Genomic_DNA"/>
</dbReference>
<dbReference type="EMBL" id="AF237801">
    <property type="protein sequence ID" value="AAK00803.1"/>
    <property type="molecule type" value="Genomic_DNA"/>
</dbReference>
<dbReference type="EMBL" id="AF237797">
    <property type="protein sequence ID" value="AAK00803.1"/>
    <property type="status" value="JOINED"/>
    <property type="molecule type" value="Genomic_DNA"/>
</dbReference>
<dbReference type="EMBL" id="AF237798">
    <property type="protein sequence ID" value="AAK00803.1"/>
    <property type="status" value="JOINED"/>
    <property type="molecule type" value="Genomic_DNA"/>
</dbReference>
<dbReference type="EMBL" id="AF237799">
    <property type="protein sequence ID" value="AAK00803.1"/>
    <property type="status" value="JOINED"/>
    <property type="molecule type" value="Genomic_DNA"/>
</dbReference>
<dbReference type="EMBL" id="AF237800">
    <property type="protein sequence ID" value="AAK00803.1"/>
    <property type="status" value="JOINED"/>
    <property type="molecule type" value="Genomic_DNA"/>
</dbReference>
<dbReference type="EMBL" id="AY874469">
    <property type="protein sequence ID" value="AAX82902.1"/>
    <property type="molecule type" value="Genomic_DNA"/>
</dbReference>
<dbReference type="EMBL" id="AY874465">
    <property type="protein sequence ID" value="AAX82902.1"/>
    <property type="status" value="JOINED"/>
    <property type="molecule type" value="Genomic_DNA"/>
</dbReference>
<dbReference type="EMBL" id="AY874466">
    <property type="protein sequence ID" value="AAX82902.1"/>
    <property type="status" value="JOINED"/>
    <property type="molecule type" value="Genomic_DNA"/>
</dbReference>
<dbReference type="EMBL" id="AY874468">
    <property type="protein sequence ID" value="AAX82902.1"/>
    <property type="status" value="JOINED"/>
    <property type="molecule type" value="Genomic_DNA"/>
</dbReference>
<dbReference type="EMBL" id="AY874467">
    <property type="protein sequence ID" value="AAX82902.1"/>
    <property type="status" value="JOINED"/>
    <property type="molecule type" value="Genomic_DNA"/>
</dbReference>
<dbReference type="EMBL" id="AY874464">
    <property type="protein sequence ID" value="AAX82905.1"/>
    <property type="molecule type" value="Genomic_DNA"/>
</dbReference>
<dbReference type="EMBL" id="AY874460">
    <property type="protein sequence ID" value="AAX82905.1"/>
    <property type="status" value="JOINED"/>
    <property type="molecule type" value="Genomic_DNA"/>
</dbReference>
<dbReference type="EMBL" id="AY874462">
    <property type="protein sequence ID" value="AAX82905.1"/>
    <property type="status" value="JOINED"/>
    <property type="molecule type" value="Genomic_DNA"/>
</dbReference>
<dbReference type="EMBL" id="AY874463">
    <property type="protein sequence ID" value="AAX82905.1"/>
    <property type="status" value="JOINED"/>
    <property type="molecule type" value="Genomic_DNA"/>
</dbReference>
<dbReference type="EMBL" id="AY874461">
    <property type="protein sequence ID" value="AAX82905.1"/>
    <property type="status" value="JOINED"/>
    <property type="molecule type" value="Genomic_DNA"/>
</dbReference>
<dbReference type="EMBL" id="AF183601">
    <property type="protein sequence ID" value="AAG27271.1"/>
    <property type="molecule type" value="Genomic_DNA"/>
</dbReference>
<dbReference type="EMBL" id="AF183599">
    <property type="protein sequence ID" value="AAG27271.1"/>
    <property type="status" value="JOINED"/>
    <property type="molecule type" value="Genomic_DNA"/>
</dbReference>
<dbReference type="EMBL" id="AF183600">
    <property type="protein sequence ID" value="AAG27271.1"/>
    <property type="status" value="JOINED"/>
    <property type="molecule type" value="Genomic_DNA"/>
</dbReference>
<dbReference type="EMBL" id="AF183603">
    <property type="protein sequence ID" value="AAG27272.1"/>
    <property type="molecule type" value="Genomic_DNA"/>
</dbReference>
<dbReference type="EMBL" id="AF183602">
    <property type="protein sequence ID" value="AAG27272.1"/>
    <property type="status" value="JOINED"/>
    <property type="molecule type" value="Genomic_DNA"/>
</dbReference>
<dbReference type="SMR" id="Q9BDE0"/>
<dbReference type="FunCoup" id="Q9BDE0">
    <property type="interactions" value="137"/>
</dbReference>
<dbReference type="STRING" id="9593.ENSGGOP00000008910"/>
<dbReference type="GlyCosmos" id="Q9BDE0">
    <property type="glycosylation" value="6 sites, No reported glycans"/>
</dbReference>
<dbReference type="eggNOG" id="ENOG502QRET">
    <property type="taxonomic scope" value="Eukaryota"/>
</dbReference>
<dbReference type="InParanoid" id="Q9BDE0"/>
<dbReference type="Proteomes" id="UP000001519">
    <property type="component" value="Unplaced"/>
</dbReference>
<dbReference type="GO" id="GO:0042470">
    <property type="term" value="C:melanosome"/>
    <property type="evidence" value="ECO:0000250"/>
    <property type="project" value="UniProtKB"/>
</dbReference>
<dbReference type="GO" id="GO:0033162">
    <property type="term" value="C:melanosome membrane"/>
    <property type="evidence" value="ECO:0007669"/>
    <property type="project" value="UniProtKB-SubCell"/>
</dbReference>
<dbReference type="GO" id="GO:0046872">
    <property type="term" value="F:metal ion binding"/>
    <property type="evidence" value="ECO:0007669"/>
    <property type="project" value="UniProtKB-KW"/>
</dbReference>
<dbReference type="GO" id="GO:0042803">
    <property type="term" value="F:protein homodimerization activity"/>
    <property type="evidence" value="ECO:0000250"/>
    <property type="project" value="UniProtKB"/>
</dbReference>
<dbReference type="GO" id="GO:0004503">
    <property type="term" value="F:tyrosinase activity"/>
    <property type="evidence" value="ECO:0000318"/>
    <property type="project" value="GO_Central"/>
</dbReference>
<dbReference type="GO" id="GO:0042438">
    <property type="term" value="P:melanin biosynthetic process"/>
    <property type="evidence" value="ECO:0000318"/>
    <property type="project" value="GO_Central"/>
</dbReference>
<dbReference type="GO" id="GO:0043473">
    <property type="term" value="P:pigmentation"/>
    <property type="evidence" value="ECO:0000318"/>
    <property type="project" value="GO_Central"/>
</dbReference>
<dbReference type="GO" id="GO:0009637">
    <property type="term" value="P:response to blue light"/>
    <property type="evidence" value="ECO:0000250"/>
    <property type="project" value="UniProtKB"/>
</dbReference>
<dbReference type="FunFam" id="1.10.1280.10:FF:000003">
    <property type="entry name" value="Tyrosinase"/>
    <property type="match status" value="1"/>
</dbReference>
<dbReference type="Gene3D" id="1.10.1280.10">
    <property type="entry name" value="Di-copper center containing domain from catechol oxidase"/>
    <property type="match status" value="1"/>
</dbReference>
<dbReference type="InterPro" id="IPR008922">
    <property type="entry name" value="Di-copper_centre_dom_sf"/>
</dbReference>
<dbReference type="InterPro" id="IPR050316">
    <property type="entry name" value="Tyrosinase/Hemocyanin"/>
</dbReference>
<dbReference type="InterPro" id="IPR002227">
    <property type="entry name" value="Tyrosinase_Cu-bd"/>
</dbReference>
<dbReference type="PANTHER" id="PTHR11474:SF124">
    <property type="entry name" value="TYROSINASE"/>
    <property type="match status" value="1"/>
</dbReference>
<dbReference type="PANTHER" id="PTHR11474">
    <property type="entry name" value="TYROSINASE FAMILY MEMBER"/>
    <property type="match status" value="1"/>
</dbReference>
<dbReference type="Pfam" id="PF00264">
    <property type="entry name" value="Tyrosinase"/>
    <property type="match status" value="1"/>
</dbReference>
<dbReference type="PRINTS" id="PR00092">
    <property type="entry name" value="TYROSINASE"/>
</dbReference>
<dbReference type="SUPFAM" id="SSF48056">
    <property type="entry name" value="Di-copper centre-containing domain"/>
    <property type="match status" value="1"/>
</dbReference>
<dbReference type="PROSITE" id="PS00497">
    <property type="entry name" value="TYROSINASE_1"/>
    <property type="match status" value="1"/>
</dbReference>
<dbReference type="PROSITE" id="PS00498">
    <property type="entry name" value="TYROSINASE_2"/>
    <property type="match status" value="1"/>
</dbReference>
<comment type="function">
    <text evidence="1">This is a copper-containing oxidase that functions in the formation of pigments such as melanins and other polyphenolic compounds (By similarity). Catalyzes the initial and rate limiting step in the cascade of reactions leading to melanin production from tyrosine (By similarity). In addition to hydroxylating tyrosine to DOPA (3,4-dihydroxyphenylalanine), also catalyzes the oxidation of DOPA to DOPA-quinone, and possibly the oxidation of DHI (5,6-dihydroxyindole) to indole-5,6 quinone (By similarity).</text>
</comment>
<comment type="catalytic activity">
    <reaction evidence="1">
        <text>2 L-dopa + O2 = 2 L-dopaquinone + 2 H2O</text>
        <dbReference type="Rhea" id="RHEA:34287"/>
        <dbReference type="ChEBI" id="CHEBI:15377"/>
        <dbReference type="ChEBI" id="CHEBI:15379"/>
        <dbReference type="ChEBI" id="CHEBI:57504"/>
        <dbReference type="ChEBI" id="CHEBI:57924"/>
        <dbReference type="EC" id="1.14.18.1"/>
    </reaction>
</comment>
<comment type="catalytic activity">
    <reaction evidence="1">
        <text>L-tyrosine + O2 = L-dopaquinone + H2O</text>
        <dbReference type="Rhea" id="RHEA:18117"/>
        <dbReference type="ChEBI" id="CHEBI:15377"/>
        <dbReference type="ChEBI" id="CHEBI:15379"/>
        <dbReference type="ChEBI" id="CHEBI:57924"/>
        <dbReference type="ChEBI" id="CHEBI:58315"/>
        <dbReference type="EC" id="1.14.18.1"/>
    </reaction>
</comment>
<comment type="catalytic activity">
    <reaction evidence="2">
        <text>2 5,6-dihydroxyindole-2-carboxylate + O2 = 2 indole-5,6-quinone-2-carboxylate + 2 H2O</text>
        <dbReference type="Rhea" id="RHEA:68388"/>
        <dbReference type="ChEBI" id="CHEBI:15377"/>
        <dbReference type="ChEBI" id="CHEBI:15379"/>
        <dbReference type="ChEBI" id="CHEBI:16875"/>
        <dbReference type="ChEBI" id="CHEBI:177869"/>
    </reaction>
    <physiologicalReaction direction="left-to-right" evidence="2">
        <dbReference type="Rhea" id="RHEA:68389"/>
    </physiologicalReaction>
</comment>
<comment type="cofactor">
    <cofactor evidence="3">
        <name>Cu(2+)</name>
        <dbReference type="ChEBI" id="CHEBI:29036"/>
    </cofactor>
    <text evidence="3">Binds 2 copper ions per subunit.</text>
</comment>
<comment type="subunit">
    <text evidence="2">Forms an OPN3-dependent complex with DCT in response to blue light in melanocytes.</text>
</comment>
<comment type="subcellular location">
    <subcellularLocation>
        <location evidence="2">Melanosome membrane</location>
        <topology evidence="2">Single-pass type I membrane protein</topology>
    </subcellularLocation>
    <subcellularLocation>
        <location evidence="1">Melanosome</location>
    </subcellularLocation>
    <text evidence="1">Proper trafficking to melanosome is regulated by SGSM2, ANKRD27, RAB9A, RAB32 and RAB38.</text>
</comment>
<comment type="PTM">
    <text evidence="1">Glycosylated.</text>
</comment>
<comment type="disease">
    <text evidence="6">Defects in TYR are the cause of oculocutaneous albinism (OCA). The only known albino gorilla, called Floquet de Neu ('Snowflake') had white hair, pink skin and blue eyes (zoologic park of Barcelona, 1964-2003). No differences were found at the amino-acid level but the activity of this enzyme was lacking in 'Snowflake'.</text>
</comment>
<comment type="similarity">
    <text evidence="7">Belongs to the tyrosinase family.</text>
</comment>
<comment type="online information" name="Protein Spotlight">
    <link uri="https://www.proteinspotlight.org/back_issues/049"/>
    <text>Snowy stardom - Issue 49 of August 2004</text>
</comment>
<organism>
    <name type="scientific">Gorilla gorilla gorilla</name>
    <name type="common">Western lowland gorilla</name>
    <dbReference type="NCBI Taxonomy" id="9595"/>
    <lineage>
        <taxon>Eukaryota</taxon>
        <taxon>Metazoa</taxon>
        <taxon>Chordata</taxon>
        <taxon>Craniata</taxon>
        <taxon>Vertebrata</taxon>
        <taxon>Euteleostomi</taxon>
        <taxon>Mammalia</taxon>
        <taxon>Eutheria</taxon>
        <taxon>Euarchontoglires</taxon>
        <taxon>Primates</taxon>
        <taxon>Haplorrhini</taxon>
        <taxon>Catarrhini</taxon>
        <taxon>Hominidae</taxon>
        <taxon>Gorilla</taxon>
    </lineage>
</organism>